<gene>
    <name type="primary">candA-C</name>
    <name type="ORF">AN2458</name>
</gene>
<protein>
    <recommendedName>
        <fullName>Cullin-associated NEDD8-dissociated protein 1, C-terminal part</fullName>
    </recommendedName>
    <alternativeName>
        <fullName>Cullin-associated and neddylation-dissociated protein 1, C-terminal part</fullName>
    </alternativeName>
</protein>
<reference key="1">
    <citation type="journal article" date="2005" name="Nature">
        <title>Sequencing of Aspergillus nidulans and comparative analysis with A. fumigatus and A. oryzae.</title>
        <authorList>
            <person name="Galagan J.E."/>
            <person name="Calvo S.E."/>
            <person name="Cuomo C."/>
            <person name="Ma L.-J."/>
            <person name="Wortman J.R."/>
            <person name="Batzoglou S."/>
            <person name="Lee S.-I."/>
            <person name="Bastuerkmen M."/>
            <person name="Spevak C.C."/>
            <person name="Clutterbuck J."/>
            <person name="Kapitonov V."/>
            <person name="Jurka J."/>
            <person name="Scazzocchio C."/>
            <person name="Farman M.L."/>
            <person name="Butler J."/>
            <person name="Purcell S."/>
            <person name="Harris S."/>
            <person name="Braus G.H."/>
            <person name="Draht O."/>
            <person name="Busch S."/>
            <person name="D'Enfert C."/>
            <person name="Bouchier C."/>
            <person name="Goldman G.H."/>
            <person name="Bell-Pedersen D."/>
            <person name="Griffiths-Jones S."/>
            <person name="Doonan J.H."/>
            <person name="Yu J."/>
            <person name="Vienken K."/>
            <person name="Pain A."/>
            <person name="Freitag M."/>
            <person name="Selker E.U."/>
            <person name="Archer D.B."/>
            <person name="Penalva M.A."/>
            <person name="Oakley B.R."/>
            <person name="Momany M."/>
            <person name="Tanaka T."/>
            <person name="Kumagai T."/>
            <person name="Asai K."/>
            <person name="Machida M."/>
            <person name="Nierman W.C."/>
            <person name="Denning D.W."/>
            <person name="Caddick M.X."/>
            <person name="Hynes M."/>
            <person name="Paoletti M."/>
            <person name="Fischer R."/>
            <person name="Miller B.L."/>
            <person name="Dyer P.S."/>
            <person name="Sachs M.S."/>
            <person name="Osmani S.A."/>
            <person name="Birren B.W."/>
        </authorList>
    </citation>
    <scope>NUCLEOTIDE SEQUENCE [LARGE SCALE GENOMIC DNA]</scope>
    <source>
        <strain>FGSC A4 / ATCC 38163 / CBS 112.46 / NRRL 194 / M139</strain>
    </source>
</reference>
<reference key="2">
    <citation type="journal article" date="2009" name="Fungal Genet. Biol.">
        <title>The 2008 update of the Aspergillus nidulans genome annotation: a community effort.</title>
        <authorList>
            <person name="Wortman J.R."/>
            <person name="Gilsenan J.M."/>
            <person name="Joardar V."/>
            <person name="Deegan J."/>
            <person name="Clutterbuck J."/>
            <person name="Andersen M.R."/>
            <person name="Archer D."/>
            <person name="Bencina M."/>
            <person name="Braus G."/>
            <person name="Coutinho P."/>
            <person name="von Dohren H."/>
            <person name="Doonan J."/>
            <person name="Driessen A.J."/>
            <person name="Durek P."/>
            <person name="Espeso E."/>
            <person name="Fekete E."/>
            <person name="Flipphi M."/>
            <person name="Estrada C.G."/>
            <person name="Geysens S."/>
            <person name="Goldman G."/>
            <person name="de Groot P.W."/>
            <person name="Hansen K."/>
            <person name="Harris S.D."/>
            <person name="Heinekamp T."/>
            <person name="Helmstaedt K."/>
            <person name="Henrissat B."/>
            <person name="Hofmann G."/>
            <person name="Homan T."/>
            <person name="Horio T."/>
            <person name="Horiuchi H."/>
            <person name="James S."/>
            <person name="Jones M."/>
            <person name="Karaffa L."/>
            <person name="Karanyi Z."/>
            <person name="Kato M."/>
            <person name="Keller N."/>
            <person name="Kelly D.E."/>
            <person name="Kiel J.A."/>
            <person name="Kim J.M."/>
            <person name="van der Klei I.J."/>
            <person name="Klis F.M."/>
            <person name="Kovalchuk A."/>
            <person name="Krasevec N."/>
            <person name="Kubicek C.P."/>
            <person name="Liu B."/>
            <person name="Maccabe A."/>
            <person name="Meyer V."/>
            <person name="Mirabito P."/>
            <person name="Miskei M."/>
            <person name="Mos M."/>
            <person name="Mullins J."/>
            <person name="Nelson D.R."/>
            <person name="Nielsen J."/>
            <person name="Oakley B.R."/>
            <person name="Osmani S.A."/>
            <person name="Pakula T."/>
            <person name="Paszewski A."/>
            <person name="Paulsen I."/>
            <person name="Pilsyk S."/>
            <person name="Pocsi I."/>
            <person name="Punt P.J."/>
            <person name="Ram A.F."/>
            <person name="Ren Q."/>
            <person name="Robellet X."/>
            <person name="Robson G."/>
            <person name="Seiboth B."/>
            <person name="van Solingen P."/>
            <person name="Specht T."/>
            <person name="Sun J."/>
            <person name="Taheri-Talesh N."/>
            <person name="Takeshita N."/>
            <person name="Ussery D."/>
            <person name="vanKuyk P.A."/>
            <person name="Visser H."/>
            <person name="van de Vondervoort P.J."/>
            <person name="de Vries R.P."/>
            <person name="Walton J."/>
            <person name="Xiang X."/>
            <person name="Xiong Y."/>
            <person name="Zeng A.P."/>
            <person name="Brandt B.W."/>
            <person name="Cornell M.J."/>
            <person name="van den Hondel C.A."/>
            <person name="Visser J."/>
            <person name="Oliver S.G."/>
            <person name="Turner G."/>
        </authorList>
    </citation>
    <scope>GENOME REANNOTATION</scope>
    <source>
        <strain>FGSC A4 / ATCC 38163 / CBS 112.46 / NRRL 194 / M139</strain>
    </source>
</reference>
<reference key="3">
    <citation type="journal article" date="2011" name="Mol. Biol. Cell">
        <title>Recruitment of the inhibitor Cand1 to the cullin substrate adaptor site mediates interaction to the neddylation site.</title>
        <authorList>
            <person name="Helmstaedt K."/>
            <person name="Schwier E.U."/>
            <person name="Christmann M."/>
            <person name="Nahlik K."/>
            <person name="Westermann M."/>
            <person name="Harting R."/>
            <person name="Grond S."/>
            <person name="Busch S."/>
            <person name="Braus G.H."/>
        </authorList>
    </citation>
    <scope>SUBCELLULAR LOCATION</scope>
    <scope>DISRUPTION PHENOTYPE</scope>
    <scope>INTERACTION WITH CANDA-N; CULA AND CULD</scope>
</reference>
<proteinExistence type="evidence at protein level"/>
<organism>
    <name type="scientific">Emericella nidulans (strain FGSC A4 / ATCC 38163 / CBS 112.46 / NRRL 194 / M139)</name>
    <name type="common">Aspergillus nidulans</name>
    <dbReference type="NCBI Taxonomy" id="227321"/>
    <lineage>
        <taxon>Eukaryota</taxon>
        <taxon>Fungi</taxon>
        <taxon>Dikarya</taxon>
        <taxon>Ascomycota</taxon>
        <taxon>Pezizomycotina</taxon>
        <taxon>Eurotiomycetes</taxon>
        <taxon>Eurotiomycetidae</taxon>
        <taxon>Eurotiales</taxon>
        <taxon>Aspergillaceae</taxon>
        <taxon>Aspergillus</taxon>
        <taxon>Aspergillus subgen. Nidulantes</taxon>
    </lineage>
</organism>
<dbReference type="EMBL" id="AACD01000040">
    <property type="protein sequence ID" value="EAA64164.1"/>
    <property type="molecule type" value="Genomic_DNA"/>
</dbReference>
<dbReference type="EMBL" id="BN001307">
    <property type="protein sequence ID" value="CBF86897.1"/>
    <property type="molecule type" value="Genomic_DNA"/>
</dbReference>
<dbReference type="RefSeq" id="XP_660062.1">
    <property type="nucleotide sequence ID" value="XM_654970.1"/>
</dbReference>
<dbReference type="SMR" id="Q5BAH2"/>
<dbReference type="STRING" id="227321.Q5BAH2"/>
<dbReference type="EnsemblFungi" id="CBF86897">
    <property type="protein sequence ID" value="CBF86897"/>
    <property type="gene ID" value="ANIA_02458"/>
</dbReference>
<dbReference type="KEGG" id="ani:ANIA_02458"/>
<dbReference type="VEuPathDB" id="FungiDB:AN2458"/>
<dbReference type="eggNOG" id="KOG1824">
    <property type="taxonomic scope" value="Eukaryota"/>
</dbReference>
<dbReference type="HOGENOM" id="CLU_007157_0_0_1"/>
<dbReference type="InParanoid" id="Q5BAH2"/>
<dbReference type="OMA" id="AYIPHFQ"/>
<dbReference type="OrthoDB" id="6260732at2759"/>
<dbReference type="Proteomes" id="UP000000560">
    <property type="component" value="Chromosome VII"/>
</dbReference>
<dbReference type="GO" id="GO:0005634">
    <property type="term" value="C:nucleus"/>
    <property type="evidence" value="ECO:0000314"/>
    <property type="project" value="AspGD"/>
</dbReference>
<dbReference type="GO" id="GO:1900797">
    <property type="term" value="P:cordyol C metabolic process"/>
    <property type="evidence" value="ECO:0000315"/>
    <property type="project" value="AspGD"/>
</dbReference>
<dbReference type="GO" id="GO:1900570">
    <property type="term" value="P:diorcinol metabolic process"/>
    <property type="evidence" value="ECO:0000315"/>
    <property type="project" value="AspGD"/>
</dbReference>
<dbReference type="GO" id="GO:0018940">
    <property type="term" value="P:orcinol metabolic process"/>
    <property type="evidence" value="ECO:0000315"/>
    <property type="project" value="AspGD"/>
</dbReference>
<dbReference type="GO" id="GO:0016567">
    <property type="term" value="P:protein ubiquitination"/>
    <property type="evidence" value="ECO:0000318"/>
    <property type="project" value="GO_Central"/>
</dbReference>
<dbReference type="GO" id="GO:0010265">
    <property type="term" value="P:SCF complex assembly"/>
    <property type="evidence" value="ECO:0000318"/>
    <property type="project" value="GO_Central"/>
</dbReference>
<dbReference type="GO" id="GO:0043935">
    <property type="term" value="P:sexual sporulation resulting in formation of a cellular spore"/>
    <property type="evidence" value="ECO:0000315"/>
    <property type="project" value="AspGD"/>
</dbReference>
<dbReference type="GO" id="GO:0000909">
    <property type="term" value="P:sporocarp development involved in sexual reproduction"/>
    <property type="evidence" value="ECO:0000315"/>
    <property type="project" value="AspGD"/>
</dbReference>
<dbReference type="GO" id="GO:1900588">
    <property type="term" value="P:violaceol I metabolic process"/>
    <property type="evidence" value="ECO:0000315"/>
    <property type="project" value="AspGD"/>
</dbReference>
<dbReference type="GO" id="GO:1900591">
    <property type="term" value="P:violaceol II metabolic process"/>
    <property type="evidence" value="ECO:0000315"/>
    <property type="project" value="AspGD"/>
</dbReference>
<dbReference type="Gene3D" id="1.25.10.10">
    <property type="entry name" value="Leucine-rich Repeat Variant"/>
    <property type="match status" value="1"/>
</dbReference>
<dbReference type="InterPro" id="IPR011989">
    <property type="entry name" value="ARM-like"/>
</dbReference>
<dbReference type="InterPro" id="IPR016024">
    <property type="entry name" value="ARM-type_fold"/>
</dbReference>
<dbReference type="InterPro" id="IPR039852">
    <property type="entry name" value="CAND1/CAND2"/>
</dbReference>
<dbReference type="InterPro" id="IPR013932">
    <property type="entry name" value="TATA-bd_TIP120"/>
</dbReference>
<dbReference type="PANTHER" id="PTHR12696">
    <property type="entry name" value="TIP120"/>
    <property type="match status" value="1"/>
</dbReference>
<dbReference type="Pfam" id="PF08623">
    <property type="entry name" value="TIP120"/>
    <property type="match status" value="1"/>
</dbReference>
<dbReference type="SUPFAM" id="SSF48371">
    <property type="entry name" value="ARM repeat"/>
    <property type="match status" value="1"/>
</dbReference>
<comment type="function">
    <text evidence="1">Assembly factor of SCF (SKP1-CUL1-F-box protein) E3 ubiquitin ligase complexes that promotes the exchange of the substrate-recognition F-box subunit in SCF complexes, thereby playing a key role in the cellular repertoire of SCF complexes. Acts as a F-box protein exchange factor when interacting with candA-N (By similarity).</text>
</comment>
<comment type="subunit">
    <text evidence="3">Interacts with candA-N. Interacts with unneddylated cullins culA and culD.</text>
</comment>
<comment type="subcellular location">
    <subcellularLocation>
        <location evidence="3">Nucleus</location>
    </subcellularLocation>
</comment>
<comment type="disruption phenotype">
    <text evidence="3">Cells show a dark red color when grown on an air-medium interface that induces development. Cells are able to initiate the cycle but are blocked in the initial stage of early nest formation. Cells exhibit reduction in asexual development and block in sexual development.</text>
</comment>
<comment type="miscellaneous">
    <text>In E.nidulans, CAND1 is separated into 2 distinct proteins: candA-N (AC C8VP82) and candA-C, corresponding to the N- and C-termini respectively of the protein in other species.</text>
</comment>
<comment type="similarity">
    <text evidence="4">Belongs to the CAND family.</text>
</comment>
<accession>Q5BAH2</accession>
<accession>C8VP77</accession>
<keyword id="KW-0539">Nucleus</keyword>
<keyword id="KW-1185">Reference proteome</keyword>
<keyword id="KW-0677">Repeat</keyword>
<keyword id="KW-0833">Ubl conjugation pathway</keyword>
<evidence type="ECO:0000250" key="1"/>
<evidence type="ECO:0000256" key="2">
    <source>
        <dbReference type="SAM" id="MobiDB-lite"/>
    </source>
</evidence>
<evidence type="ECO:0000269" key="3">
    <source>
    </source>
</evidence>
<evidence type="ECO:0000305" key="4"/>
<feature type="chain" id="PRO_0000422243" description="Cullin-associated NEDD8-dissociated protein 1, C-terminal part">
    <location>
        <begin position="1"/>
        <end position="1041"/>
    </location>
</feature>
<feature type="repeat" description="HEAT 1">
    <location>
        <begin position="138"/>
        <end position="176"/>
    </location>
</feature>
<feature type="repeat" description="HEAT 2">
    <location>
        <begin position="242"/>
        <end position="279"/>
    </location>
</feature>
<feature type="repeat" description="HEAT 3">
    <location>
        <begin position="339"/>
        <end position="376"/>
    </location>
</feature>
<feature type="repeat" description="HEAT 4">
    <location>
        <begin position="434"/>
        <end position="472"/>
    </location>
</feature>
<feature type="repeat" description="HEAT 5">
    <location>
        <begin position="479"/>
        <end position="516"/>
    </location>
</feature>
<feature type="repeat" description="HEAT 6">
    <location>
        <begin position="525"/>
        <end position="560"/>
    </location>
</feature>
<feature type="repeat" description="HEAT 7">
    <location>
        <begin position="598"/>
        <end position="637"/>
    </location>
</feature>
<feature type="repeat" description="HEAT 8">
    <location>
        <begin position="670"/>
        <end position="708"/>
    </location>
</feature>
<feature type="repeat" description="HEAT 9">
    <location>
        <begin position="710"/>
        <end position="744"/>
    </location>
</feature>
<feature type="repeat" description="HEAT 10">
    <location>
        <begin position="780"/>
        <end position="817"/>
    </location>
</feature>
<feature type="repeat" description="HEAT 11">
    <location>
        <begin position="822"/>
        <end position="867"/>
    </location>
</feature>
<feature type="region of interest" description="Disordered" evidence="2">
    <location>
        <begin position="1"/>
        <end position="24"/>
    </location>
</feature>
<feature type="region of interest" description="Disordered" evidence="2">
    <location>
        <begin position="64"/>
        <end position="103"/>
    </location>
</feature>
<feature type="region of interest" description="Disordered" evidence="2">
    <location>
        <begin position="189"/>
        <end position="237"/>
    </location>
</feature>
<feature type="compositionally biased region" description="Basic and acidic residues" evidence="2">
    <location>
        <begin position="9"/>
        <end position="24"/>
    </location>
</feature>
<feature type="compositionally biased region" description="Acidic residues" evidence="2">
    <location>
        <begin position="65"/>
        <end position="103"/>
    </location>
</feature>
<feature type="compositionally biased region" description="Low complexity" evidence="2">
    <location>
        <begin position="225"/>
        <end position="237"/>
    </location>
</feature>
<sequence length="1041" mass="113518">MSSDAMSDYSHDDEHDPQTDELRETALVTLEALISSCSSQMQSYLPNTINSALRFLKYDPNVADMGEDEEMSGTQDDGSEDDVTEEPDLEDDDFEDFEEEGGYSDIDDMSWKVRRCAAKLLYAVISTYGRGRALDDTSLYQQIAPAIVARFNKEREESVKLELVSTMDALVRKTAEGSMIMTSSGFLESVGSGSKISRKRRRQDSDASMIDFEPSMGTSSAAGTPLAAPSSPQSGPQSELANALPVIVRSLVTMWKQASIHLKQAIIILLKSLALVRYGGLADHLQQIEDPIADVLKSSLSGAPSASIGISASAGTLQIETLSLISAISETHASDALLPFLIALIPGVIVAVNDKNYKVSSEALAAVEQIVKALTPPRVTTASQDLIFQLEKLYDVSHSRITDTSADLEVRQRAIHVLGVLLARTSDEQGSAFLSFEKRSKGLVTLVDRLKNETTRLSAVRAIDDVAVLCSRKDDVDSNWVREVTAELGAQLRKSDRVLRSASLETLRSLSMNPNTRAHYDGETMKNLEECLIPLISVEDVHLLAPSLIIIAKLVPGNAQLLVNDGLVSAICSIVRTSLAGTVLKALLLLVKVIGEEGSGLTLMQNLLQDVGVNGDTSVVGRSIGTLLVHGGSNVGVRMEDFLSELQKTQDPQRQCLALAILGESALRLGASCSLTPNVFIPHFNSKSEKVRLASATALGNAAAGNVKAYLPTILGGLEKSDPQSYLLLHSVKELLQHPEMVRRDVAPSALKLWQALLVVSKEEDNRAMGAECVGRLALLDPPAYIPQFQEYLANGDAGIRSIVVSAFRFTLSDSRDVFNDVLRPLIVPLLVNMLSDRDLGNHRLALTTLNSAIHNKLALILPHLGELLPAVLGDTQIKPELIREVQMGPFKHKVDDGLELRKSAYETVYAALDTSFSLSHITELYSRILAGIDDEQDIRTICNLMTSKLITLAPEETQRHLDALSERYTAILNFKPKENAVKQEIEKAQEASTGVLKITRELSKAFPNAETMGDHHKWKAYMEMVRAQFGTQLSNLESEF</sequence>
<name>CAN1C_EMENI</name>